<organism>
    <name type="scientific">Syntrophotalea carbinolica (strain DSM 2380 / NBRC 103641 / GraBd1)</name>
    <name type="common">Pelobacter carbinolicus</name>
    <dbReference type="NCBI Taxonomy" id="338963"/>
    <lineage>
        <taxon>Bacteria</taxon>
        <taxon>Pseudomonadati</taxon>
        <taxon>Thermodesulfobacteriota</taxon>
        <taxon>Desulfuromonadia</taxon>
        <taxon>Desulfuromonadales</taxon>
        <taxon>Syntrophotaleaceae</taxon>
        <taxon>Syntrophotalea</taxon>
    </lineage>
</organism>
<proteinExistence type="inferred from homology"/>
<reference key="1">
    <citation type="submission" date="2005-10" db="EMBL/GenBank/DDBJ databases">
        <title>Complete sequence of Pelobacter carbinolicus DSM 2380.</title>
        <authorList>
            <person name="Copeland A."/>
            <person name="Lucas S."/>
            <person name="Lapidus A."/>
            <person name="Barry K."/>
            <person name="Detter J.C."/>
            <person name="Glavina T."/>
            <person name="Hammon N."/>
            <person name="Israni S."/>
            <person name="Pitluck S."/>
            <person name="Chertkov O."/>
            <person name="Schmutz J."/>
            <person name="Larimer F."/>
            <person name="Land M."/>
            <person name="Kyrpides N."/>
            <person name="Ivanova N."/>
            <person name="Richardson P."/>
        </authorList>
    </citation>
    <scope>NUCLEOTIDE SEQUENCE [LARGE SCALE GENOMIC DNA]</scope>
    <source>
        <strain>DSM 2380 / NBRC 103641 / GraBd1</strain>
    </source>
</reference>
<keyword id="KW-0067">ATP-binding</keyword>
<keyword id="KW-0963">Cytoplasm</keyword>
<keyword id="KW-0227">DNA damage</keyword>
<keyword id="KW-0228">DNA excision</keyword>
<keyword id="KW-0234">DNA repair</keyword>
<keyword id="KW-0267">Excision nuclease</keyword>
<keyword id="KW-0547">Nucleotide-binding</keyword>
<keyword id="KW-1185">Reference proteome</keyword>
<keyword id="KW-0742">SOS response</keyword>
<feature type="chain" id="PRO_0000227338" description="UvrABC system protein B">
    <location>
        <begin position="1"/>
        <end position="667"/>
    </location>
</feature>
<feature type="domain" description="Helicase ATP-binding" evidence="1">
    <location>
        <begin position="25"/>
        <end position="414"/>
    </location>
</feature>
<feature type="domain" description="Helicase C-terminal" evidence="1">
    <location>
        <begin position="430"/>
        <end position="596"/>
    </location>
</feature>
<feature type="domain" description="UVR" evidence="1">
    <location>
        <begin position="624"/>
        <end position="659"/>
    </location>
</feature>
<feature type="short sequence motif" description="Beta-hairpin">
    <location>
        <begin position="91"/>
        <end position="114"/>
    </location>
</feature>
<feature type="binding site" evidence="1">
    <location>
        <begin position="38"/>
        <end position="45"/>
    </location>
    <ligand>
        <name>ATP</name>
        <dbReference type="ChEBI" id="CHEBI:30616"/>
    </ligand>
</feature>
<protein>
    <recommendedName>
        <fullName evidence="1">UvrABC system protein B</fullName>
        <shortName evidence="1">Protein UvrB</shortName>
    </recommendedName>
    <alternativeName>
        <fullName evidence="1">Excinuclease ABC subunit B</fullName>
    </alternativeName>
</protein>
<accession>Q3A8D0</accession>
<gene>
    <name evidence="1" type="primary">uvrB</name>
    <name type="ordered locus">Pcar_0099</name>
</gene>
<sequence length="667" mass="76499">MAKFNLKSNYQPRGDQPQAIEELSTGLQRGDKHQVLLGVTGSGKTFTMANVVAQVQRPTLVLAHNKTLAAQLYGEFKELFPDNAVEYFVSYYDYYQPEAYVPTTDTFIEKDSSINEEIDKMRHSATRSLLSRNDVLIVSSVSCIYGLGSPEAYYGMLIRLETGMQLDRNALLKNLVEIQYDRNDVDFHRGTFRVRGDTVEIFPAYEEKRALRIEFFGDEIDAICEIDPLRGKVLDRLERTAVFPASHYVATRPTLDRAIREIQDELRERLTWFRENNMLLEAQRIEQRTMFDIEMIEEMGYCQGIENYSRFLDGRQAGQPPATLFDYFPDDALLFIDESHVTVSQIGAMYRGDRSRKETLVRYGFRMPSALDNRPLTFEEFEAKGIQTIYVSATPADYELRKADGVVVEQIIRPTGLLDPPIDVRPAKDQVDDLIHEIRLTIKQNERVLVTTLTKRMAEELTGYLGELGIKVRYLHSDIDTVERMQILRELREGLFDVLVGINLLREGLDIPEVSLVAILDADKEGFLRSERSLIQTCGRAARNVAGRVIMYADRITRSMRACLDETERRRTAQLAYNEEHGITPQTVKKSLRSILEDIAEKDYVELPQVAEELGDYHTPQDVKNEIARVKEEMLAAAANLEFEKAAELRDRMLELDKLELSIRNVK</sequence>
<comment type="function">
    <text evidence="1">The UvrABC repair system catalyzes the recognition and processing of DNA lesions. A damage recognition complex composed of 2 UvrA and 2 UvrB subunits scans DNA for abnormalities. Upon binding of the UvrA(2)B(2) complex to a putative damaged site, the DNA wraps around one UvrB monomer. DNA wrap is dependent on ATP binding by UvrB and probably causes local melting of the DNA helix, facilitating insertion of UvrB beta-hairpin between the DNA strands. Then UvrB probes one DNA strand for the presence of a lesion. If a lesion is found the UvrA subunits dissociate and the UvrB-DNA preincision complex is formed. This complex is subsequently bound by UvrC and the second UvrB is released. If no lesion is found, the DNA wraps around the other UvrB subunit that will check the other stand for damage.</text>
</comment>
<comment type="subunit">
    <text evidence="1">Forms a heterotetramer with UvrA during the search for lesions. Interacts with UvrC in an incision complex.</text>
</comment>
<comment type="subcellular location">
    <subcellularLocation>
        <location evidence="1">Cytoplasm</location>
    </subcellularLocation>
</comment>
<comment type="domain">
    <text evidence="1">The beta-hairpin motif is involved in DNA binding.</text>
</comment>
<comment type="similarity">
    <text evidence="1">Belongs to the UvrB family.</text>
</comment>
<evidence type="ECO:0000255" key="1">
    <source>
        <dbReference type="HAMAP-Rule" id="MF_00204"/>
    </source>
</evidence>
<name>UVRB_SYNC1</name>
<dbReference type="EMBL" id="CP000142">
    <property type="protein sequence ID" value="ABA87362.1"/>
    <property type="molecule type" value="Genomic_DNA"/>
</dbReference>
<dbReference type="RefSeq" id="WP_011339751.1">
    <property type="nucleotide sequence ID" value="NC_007498.2"/>
</dbReference>
<dbReference type="SMR" id="Q3A8D0"/>
<dbReference type="STRING" id="338963.Pcar_0099"/>
<dbReference type="KEGG" id="pca:Pcar_0099"/>
<dbReference type="eggNOG" id="COG0556">
    <property type="taxonomic scope" value="Bacteria"/>
</dbReference>
<dbReference type="HOGENOM" id="CLU_009621_2_1_7"/>
<dbReference type="OrthoDB" id="9806651at2"/>
<dbReference type="Proteomes" id="UP000002534">
    <property type="component" value="Chromosome"/>
</dbReference>
<dbReference type="GO" id="GO:0005737">
    <property type="term" value="C:cytoplasm"/>
    <property type="evidence" value="ECO:0007669"/>
    <property type="project" value="UniProtKB-SubCell"/>
</dbReference>
<dbReference type="GO" id="GO:0009380">
    <property type="term" value="C:excinuclease repair complex"/>
    <property type="evidence" value="ECO:0007669"/>
    <property type="project" value="InterPro"/>
</dbReference>
<dbReference type="GO" id="GO:0005524">
    <property type="term" value="F:ATP binding"/>
    <property type="evidence" value="ECO:0007669"/>
    <property type="project" value="UniProtKB-UniRule"/>
</dbReference>
<dbReference type="GO" id="GO:0016887">
    <property type="term" value="F:ATP hydrolysis activity"/>
    <property type="evidence" value="ECO:0007669"/>
    <property type="project" value="InterPro"/>
</dbReference>
<dbReference type="GO" id="GO:0003677">
    <property type="term" value="F:DNA binding"/>
    <property type="evidence" value="ECO:0007669"/>
    <property type="project" value="UniProtKB-UniRule"/>
</dbReference>
<dbReference type="GO" id="GO:0009381">
    <property type="term" value="F:excinuclease ABC activity"/>
    <property type="evidence" value="ECO:0007669"/>
    <property type="project" value="UniProtKB-UniRule"/>
</dbReference>
<dbReference type="GO" id="GO:0006289">
    <property type="term" value="P:nucleotide-excision repair"/>
    <property type="evidence" value="ECO:0007669"/>
    <property type="project" value="UniProtKB-UniRule"/>
</dbReference>
<dbReference type="GO" id="GO:0009432">
    <property type="term" value="P:SOS response"/>
    <property type="evidence" value="ECO:0007669"/>
    <property type="project" value="UniProtKB-UniRule"/>
</dbReference>
<dbReference type="CDD" id="cd17916">
    <property type="entry name" value="DEXHc_UvrB"/>
    <property type="match status" value="1"/>
</dbReference>
<dbReference type="CDD" id="cd18790">
    <property type="entry name" value="SF2_C_UvrB"/>
    <property type="match status" value="1"/>
</dbReference>
<dbReference type="Gene3D" id="6.10.140.240">
    <property type="match status" value="1"/>
</dbReference>
<dbReference type="Gene3D" id="3.40.50.300">
    <property type="entry name" value="P-loop containing nucleotide triphosphate hydrolases"/>
    <property type="match status" value="3"/>
</dbReference>
<dbReference type="Gene3D" id="4.10.860.10">
    <property type="entry name" value="UVR domain"/>
    <property type="match status" value="1"/>
</dbReference>
<dbReference type="HAMAP" id="MF_00204">
    <property type="entry name" value="UvrB"/>
    <property type="match status" value="1"/>
</dbReference>
<dbReference type="InterPro" id="IPR006935">
    <property type="entry name" value="Helicase/UvrB_N"/>
</dbReference>
<dbReference type="InterPro" id="IPR014001">
    <property type="entry name" value="Helicase_ATP-bd"/>
</dbReference>
<dbReference type="InterPro" id="IPR001650">
    <property type="entry name" value="Helicase_C-like"/>
</dbReference>
<dbReference type="InterPro" id="IPR027417">
    <property type="entry name" value="P-loop_NTPase"/>
</dbReference>
<dbReference type="InterPro" id="IPR001943">
    <property type="entry name" value="UVR_dom"/>
</dbReference>
<dbReference type="InterPro" id="IPR036876">
    <property type="entry name" value="UVR_dom_sf"/>
</dbReference>
<dbReference type="InterPro" id="IPR004807">
    <property type="entry name" value="UvrB"/>
</dbReference>
<dbReference type="InterPro" id="IPR041471">
    <property type="entry name" value="UvrB_inter"/>
</dbReference>
<dbReference type="InterPro" id="IPR024759">
    <property type="entry name" value="UvrB_YAD/RRR_dom"/>
</dbReference>
<dbReference type="NCBIfam" id="NF003673">
    <property type="entry name" value="PRK05298.1"/>
    <property type="match status" value="1"/>
</dbReference>
<dbReference type="NCBIfam" id="TIGR00631">
    <property type="entry name" value="uvrb"/>
    <property type="match status" value="1"/>
</dbReference>
<dbReference type="PANTHER" id="PTHR24029">
    <property type="entry name" value="UVRABC SYSTEM PROTEIN B"/>
    <property type="match status" value="1"/>
</dbReference>
<dbReference type="PANTHER" id="PTHR24029:SF0">
    <property type="entry name" value="UVRABC SYSTEM PROTEIN B"/>
    <property type="match status" value="1"/>
</dbReference>
<dbReference type="Pfam" id="PF00271">
    <property type="entry name" value="Helicase_C"/>
    <property type="match status" value="1"/>
</dbReference>
<dbReference type="Pfam" id="PF04851">
    <property type="entry name" value="ResIII"/>
    <property type="match status" value="1"/>
</dbReference>
<dbReference type="Pfam" id="PF02151">
    <property type="entry name" value="UVR"/>
    <property type="match status" value="1"/>
</dbReference>
<dbReference type="Pfam" id="PF12344">
    <property type="entry name" value="UvrB"/>
    <property type="match status" value="1"/>
</dbReference>
<dbReference type="Pfam" id="PF17757">
    <property type="entry name" value="UvrB_inter"/>
    <property type="match status" value="1"/>
</dbReference>
<dbReference type="SMART" id="SM00487">
    <property type="entry name" value="DEXDc"/>
    <property type="match status" value="1"/>
</dbReference>
<dbReference type="SMART" id="SM00490">
    <property type="entry name" value="HELICc"/>
    <property type="match status" value="1"/>
</dbReference>
<dbReference type="SUPFAM" id="SSF46600">
    <property type="entry name" value="C-terminal UvrC-binding domain of UvrB"/>
    <property type="match status" value="1"/>
</dbReference>
<dbReference type="SUPFAM" id="SSF52540">
    <property type="entry name" value="P-loop containing nucleoside triphosphate hydrolases"/>
    <property type="match status" value="2"/>
</dbReference>
<dbReference type="PROSITE" id="PS51192">
    <property type="entry name" value="HELICASE_ATP_BIND_1"/>
    <property type="match status" value="1"/>
</dbReference>
<dbReference type="PROSITE" id="PS51194">
    <property type="entry name" value="HELICASE_CTER"/>
    <property type="match status" value="1"/>
</dbReference>
<dbReference type="PROSITE" id="PS50151">
    <property type="entry name" value="UVR"/>
    <property type="match status" value="1"/>
</dbReference>